<comment type="function">
    <text evidence="1">Forms an efflux pump with AaeB.</text>
</comment>
<comment type="subcellular location">
    <subcellularLocation>
        <location evidence="1">Cell inner membrane</location>
        <topology evidence="1">Single-pass membrane protein</topology>
    </subcellularLocation>
</comment>
<comment type="induction">
    <text evidence="1">Positively coregulated with aaeB and aaeX by AaeR.</text>
</comment>
<comment type="similarity">
    <text evidence="1">Belongs to the membrane fusion protein (MFP) (TC 8.A.1) family.</text>
</comment>
<reference key="1">
    <citation type="journal article" date="2009" name="PLoS Genet.">
        <title>Organised genome dynamics in the Escherichia coli species results in highly diverse adaptive paths.</title>
        <authorList>
            <person name="Touchon M."/>
            <person name="Hoede C."/>
            <person name="Tenaillon O."/>
            <person name="Barbe V."/>
            <person name="Baeriswyl S."/>
            <person name="Bidet P."/>
            <person name="Bingen E."/>
            <person name="Bonacorsi S."/>
            <person name="Bouchier C."/>
            <person name="Bouvet O."/>
            <person name="Calteau A."/>
            <person name="Chiapello H."/>
            <person name="Clermont O."/>
            <person name="Cruveiller S."/>
            <person name="Danchin A."/>
            <person name="Diard M."/>
            <person name="Dossat C."/>
            <person name="Karoui M.E."/>
            <person name="Frapy E."/>
            <person name="Garry L."/>
            <person name="Ghigo J.M."/>
            <person name="Gilles A.M."/>
            <person name="Johnson J."/>
            <person name="Le Bouguenec C."/>
            <person name="Lescat M."/>
            <person name="Mangenot S."/>
            <person name="Martinez-Jehanne V."/>
            <person name="Matic I."/>
            <person name="Nassif X."/>
            <person name="Oztas S."/>
            <person name="Petit M.A."/>
            <person name="Pichon C."/>
            <person name="Rouy Z."/>
            <person name="Ruf C.S."/>
            <person name="Schneider D."/>
            <person name="Tourret J."/>
            <person name="Vacherie B."/>
            <person name="Vallenet D."/>
            <person name="Medigue C."/>
            <person name="Rocha E.P.C."/>
            <person name="Denamur E."/>
        </authorList>
    </citation>
    <scope>NUCLEOTIDE SEQUENCE [LARGE SCALE GENOMIC DNA]</scope>
    <source>
        <strain>IAI1</strain>
    </source>
</reference>
<dbReference type="EMBL" id="CU928160">
    <property type="protein sequence ID" value="CAR00197.1"/>
    <property type="molecule type" value="Genomic_DNA"/>
</dbReference>
<dbReference type="RefSeq" id="WP_000854020.1">
    <property type="nucleotide sequence ID" value="NC_011741.1"/>
</dbReference>
<dbReference type="SMR" id="B7M0V3"/>
<dbReference type="KEGG" id="ecr:ECIAI1_3383"/>
<dbReference type="HOGENOM" id="CLU_018816_15_2_6"/>
<dbReference type="GO" id="GO:0005886">
    <property type="term" value="C:plasma membrane"/>
    <property type="evidence" value="ECO:0007669"/>
    <property type="project" value="UniProtKB-SubCell"/>
</dbReference>
<dbReference type="GO" id="GO:0022857">
    <property type="term" value="F:transmembrane transporter activity"/>
    <property type="evidence" value="ECO:0007669"/>
    <property type="project" value="UniProtKB-UniRule"/>
</dbReference>
<dbReference type="FunFam" id="2.40.30.170:FF:000002">
    <property type="entry name" value="p-hydroxybenzoic acid efflux pump subunit AaeA"/>
    <property type="match status" value="1"/>
</dbReference>
<dbReference type="FunFam" id="2.40.50.100:FF:000018">
    <property type="entry name" value="p-hydroxybenzoic acid efflux pump subunit AaeA"/>
    <property type="match status" value="1"/>
</dbReference>
<dbReference type="Gene3D" id="2.40.30.170">
    <property type="match status" value="1"/>
</dbReference>
<dbReference type="Gene3D" id="2.40.50.100">
    <property type="match status" value="1"/>
</dbReference>
<dbReference type="HAMAP" id="MF_01544">
    <property type="entry name" value="AaeA"/>
    <property type="match status" value="1"/>
</dbReference>
<dbReference type="InterPro" id="IPR043602">
    <property type="entry name" value="CusB-like_dom_1"/>
</dbReference>
<dbReference type="InterPro" id="IPR032317">
    <property type="entry name" value="CusB_D23"/>
</dbReference>
<dbReference type="InterPro" id="IPR050393">
    <property type="entry name" value="MFP_Efflux_Pump"/>
</dbReference>
<dbReference type="InterPro" id="IPR022871">
    <property type="entry name" value="PHBA_efflux_pump_AaeA"/>
</dbReference>
<dbReference type="InterPro" id="IPR006143">
    <property type="entry name" value="RND_pump_MFP"/>
</dbReference>
<dbReference type="NCBIfam" id="NF007850">
    <property type="entry name" value="PRK10559.1"/>
    <property type="match status" value="1"/>
</dbReference>
<dbReference type="NCBIfam" id="TIGR01730">
    <property type="entry name" value="RND_mfp"/>
    <property type="match status" value="1"/>
</dbReference>
<dbReference type="PANTHER" id="PTHR30367:SF12">
    <property type="entry name" value="P-HYDROXYBENZOIC ACID EFFLUX PUMP SUBUNIT AAEA"/>
    <property type="match status" value="1"/>
</dbReference>
<dbReference type="PANTHER" id="PTHR30367">
    <property type="entry name" value="P-HYDROXYBENZOIC ACID EFFLUX PUMP SUBUNIT AAEA-RELATED"/>
    <property type="match status" value="1"/>
</dbReference>
<dbReference type="Pfam" id="PF00529">
    <property type="entry name" value="CusB_dom_1"/>
    <property type="match status" value="1"/>
</dbReference>
<dbReference type="Pfam" id="PF16576">
    <property type="entry name" value="HlyD_D23"/>
    <property type="match status" value="1"/>
</dbReference>
<dbReference type="SUPFAM" id="SSF111369">
    <property type="entry name" value="HlyD-like secretion proteins"/>
    <property type="match status" value="1"/>
</dbReference>
<sequence>MKTLIRKFSRTAITVVLVILAFIAIFNAWVYYTESPWTRDARFSADVVAIAPDVSGLITQVNVHDNQLVKKGQILFTIDQPRYQKALEEAQADVAYYQVLAQEKRQEAGRRNRLGVQAMSREEIDQANNVLQTVLHQLAKAQATRDLAKLDLERTVIRAPADGWVTNLNVYTGEFITRGSTAVALVKQNSFYVLAYMEETKLEGVRPGYRAEITPLGSNKVLKGTVDSVAAGVTNASSTRDDKGMATIDSNLEWVRLAQRVPVRICLDNQQENIWPAGTTATVVVTGKQDRDESQDSFFRKMAHRLREFG</sequence>
<proteinExistence type="inferred from homology"/>
<name>AAEA_ECO8A</name>
<keyword id="KW-0997">Cell inner membrane</keyword>
<keyword id="KW-1003">Cell membrane</keyword>
<keyword id="KW-0472">Membrane</keyword>
<keyword id="KW-0812">Transmembrane</keyword>
<keyword id="KW-1133">Transmembrane helix</keyword>
<keyword id="KW-0813">Transport</keyword>
<organism>
    <name type="scientific">Escherichia coli O8 (strain IAI1)</name>
    <dbReference type="NCBI Taxonomy" id="585034"/>
    <lineage>
        <taxon>Bacteria</taxon>
        <taxon>Pseudomonadati</taxon>
        <taxon>Pseudomonadota</taxon>
        <taxon>Gammaproteobacteria</taxon>
        <taxon>Enterobacterales</taxon>
        <taxon>Enterobacteriaceae</taxon>
        <taxon>Escherichia</taxon>
    </lineage>
</organism>
<gene>
    <name evidence="1" type="primary">aaeA</name>
    <name type="ordered locus">ECIAI1_3383</name>
</gene>
<feature type="chain" id="PRO_1000146714" description="p-hydroxybenzoic acid efflux pump subunit AaeA">
    <location>
        <begin position="1"/>
        <end position="310"/>
    </location>
</feature>
<feature type="transmembrane region" description="Helical" evidence="1">
    <location>
        <begin position="12"/>
        <end position="32"/>
    </location>
</feature>
<accession>B7M0V3</accession>
<evidence type="ECO:0000255" key="1">
    <source>
        <dbReference type="HAMAP-Rule" id="MF_01544"/>
    </source>
</evidence>
<protein>
    <recommendedName>
        <fullName evidence="1">p-hydroxybenzoic acid efflux pump subunit AaeA</fullName>
        <shortName evidence="1">pHBA efflux pump protein A</shortName>
    </recommendedName>
</protein>